<keyword id="KW-0251">Elongation factor</keyword>
<keyword id="KW-0342">GTP-binding</keyword>
<keyword id="KW-0496">Mitochondrion</keyword>
<keyword id="KW-0547">Nucleotide-binding</keyword>
<keyword id="KW-0648">Protein biosynthesis</keyword>
<keyword id="KW-1185">Reference proteome</keyword>
<keyword id="KW-0809">Transit peptide</keyword>
<evidence type="ECO:0000255" key="1">
    <source>
        <dbReference type="HAMAP-Rule" id="MF_03061"/>
    </source>
</evidence>
<evidence type="ECO:0000305" key="2"/>
<dbReference type="EMBL" id="DS231621">
    <property type="protein sequence ID" value="EDU49960.1"/>
    <property type="molecule type" value="Genomic_DNA"/>
</dbReference>
<dbReference type="RefSeq" id="XP_001937373.1">
    <property type="nucleotide sequence ID" value="XM_001937338.1"/>
</dbReference>
<dbReference type="SMR" id="B2WBM8"/>
<dbReference type="FunCoup" id="B2WBM8">
    <property type="interactions" value="662"/>
</dbReference>
<dbReference type="STRING" id="426418.B2WBM8"/>
<dbReference type="EnsemblFungi" id="EDU49960">
    <property type="protein sequence ID" value="EDU49960"/>
    <property type="gene ID" value="PTRG_07041"/>
</dbReference>
<dbReference type="GeneID" id="6345312"/>
<dbReference type="KEGG" id="ptrr:6345312"/>
<dbReference type="eggNOG" id="KOG0465">
    <property type="taxonomic scope" value="Eukaryota"/>
</dbReference>
<dbReference type="HOGENOM" id="CLU_002794_4_0_1"/>
<dbReference type="InParanoid" id="B2WBM8"/>
<dbReference type="OMA" id="GQFAKVQ"/>
<dbReference type="OrthoDB" id="10940at28556"/>
<dbReference type="UniPathway" id="UPA00345"/>
<dbReference type="Proteomes" id="UP000001471">
    <property type="component" value="Unassembled WGS sequence"/>
</dbReference>
<dbReference type="GO" id="GO:0005739">
    <property type="term" value="C:mitochondrion"/>
    <property type="evidence" value="ECO:0007669"/>
    <property type="project" value="UniProtKB-SubCell"/>
</dbReference>
<dbReference type="GO" id="GO:0005525">
    <property type="term" value="F:GTP binding"/>
    <property type="evidence" value="ECO:0007669"/>
    <property type="project" value="UniProtKB-UniRule"/>
</dbReference>
<dbReference type="GO" id="GO:0003924">
    <property type="term" value="F:GTPase activity"/>
    <property type="evidence" value="ECO:0007669"/>
    <property type="project" value="UniProtKB-UniRule"/>
</dbReference>
<dbReference type="GO" id="GO:0003746">
    <property type="term" value="F:translation elongation factor activity"/>
    <property type="evidence" value="ECO:0007669"/>
    <property type="project" value="UniProtKB-UniRule"/>
</dbReference>
<dbReference type="GO" id="GO:0070125">
    <property type="term" value="P:mitochondrial translational elongation"/>
    <property type="evidence" value="ECO:0007669"/>
    <property type="project" value="UniProtKB-UniRule"/>
</dbReference>
<dbReference type="CDD" id="cd01886">
    <property type="entry name" value="EF-G"/>
    <property type="match status" value="1"/>
</dbReference>
<dbReference type="CDD" id="cd16262">
    <property type="entry name" value="EFG_III"/>
    <property type="match status" value="1"/>
</dbReference>
<dbReference type="CDD" id="cd01434">
    <property type="entry name" value="EFG_mtEFG1_IV"/>
    <property type="match status" value="1"/>
</dbReference>
<dbReference type="CDD" id="cd04097">
    <property type="entry name" value="mtEFG1_C"/>
    <property type="match status" value="1"/>
</dbReference>
<dbReference type="CDD" id="cd04091">
    <property type="entry name" value="mtEFG1_II_like"/>
    <property type="match status" value="1"/>
</dbReference>
<dbReference type="FunFam" id="3.30.230.10:FF:000003">
    <property type="entry name" value="Elongation factor G"/>
    <property type="match status" value="1"/>
</dbReference>
<dbReference type="FunFam" id="3.30.70.870:FF:000001">
    <property type="entry name" value="Elongation factor G"/>
    <property type="match status" value="1"/>
</dbReference>
<dbReference type="FunFam" id="2.40.30.10:FF:000022">
    <property type="entry name" value="Elongation factor G, mitochondrial"/>
    <property type="match status" value="1"/>
</dbReference>
<dbReference type="FunFam" id="3.30.70.240:FF:000015">
    <property type="entry name" value="Elongation factor G, mitochondrial"/>
    <property type="match status" value="1"/>
</dbReference>
<dbReference type="FunFam" id="3.40.50.300:FF:000558">
    <property type="entry name" value="Elongation factor G, mitochondrial"/>
    <property type="match status" value="1"/>
</dbReference>
<dbReference type="Gene3D" id="3.30.230.10">
    <property type="match status" value="1"/>
</dbReference>
<dbReference type="Gene3D" id="3.30.70.240">
    <property type="match status" value="1"/>
</dbReference>
<dbReference type="Gene3D" id="3.30.70.870">
    <property type="entry name" value="Elongation Factor G (Translational Gtpase), domain 3"/>
    <property type="match status" value="1"/>
</dbReference>
<dbReference type="Gene3D" id="3.40.50.300">
    <property type="entry name" value="P-loop containing nucleotide triphosphate hydrolases"/>
    <property type="match status" value="1"/>
</dbReference>
<dbReference type="Gene3D" id="2.40.30.10">
    <property type="entry name" value="Translation factors"/>
    <property type="match status" value="1"/>
</dbReference>
<dbReference type="HAMAP" id="MF_00054_B">
    <property type="entry name" value="EF_G_EF_2_B"/>
    <property type="match status" value="1"/>
</dbReference>
<dbReference type="InterPro" id="IPR041095">
    <property type="entry name" value="EFG_II"/>
</dbReference>
<dbReference type="InterPro" id="IPR009022">
    <property type="entry name" value="EFG_III"/>
</dbReference>
<dbReference type="InterPro" id="IPR035647">
    <property type="entry name" value="EFG_III/V"/>
</dbReference>
<dbReference type="InterPro" id="IPR047872">
    <property type="entry name" value="EFG_IV"/>
</dbReference>
<dbReference type="InterPro" id="IPR035649">
    <property type="entry name" value="EFG_V"/>
</dbReference>
<dbReference type="InterPro" id="IPR000640">
    <property type="entry name" value="EFG_V-like"/>
</dbReference>
<dbReference type="InterPro" id="IPR004161">
    <property type="entry name" value="EFTu-like_2"/>
</dbReference>
<dbReference type="InterPro" id="IPR031157">
    <property type="entry name" value="G_TR_CS"/>
</dbReference>
<dbReference type="InterPro" id="IPR027417">
    <property type="entry name" value="P-loop_NTPase"/>
</dbReference>
<dbReference type="InterPro" id="IPR020568">
    <property type="entry name" value="Ribosomal_Su5_D2-typ_SF"/>
</dbReference>
<dbReference type="InterPro" id="IPR014721">
    <property type="entry name" value="Ribsml_uS5_D2-typ_fold_subgr"/>
</dbReference>
<dbReference type="InterPro" id="IPR005225">
    <property type="entry name" value="Small_GTP-bd"/>
</dbReference>
<dbReference type="InterPro" id="IPR000795">
    <property type="entry name" value="T_Tr_GTP-bd_dom"/>
</dbReference>
<dbReference type="InterPro" id="IPR009000">
    <property type="entry name" value="Transl_B-barrel_sf"/>
</dbReference>
<dbReference type="InterPro" id="IPR004540">
    <property type="entry name" value="Transl_elong_EFG/EF2"/>
</dbReference>
<dbReference type="InterPro" id="IPR005517">
    <property type="entry name" value="Transl_elong_EFG/EF2_IV"/>
</dbReference>
<dbReference type="NCBIfam" id="TIGR00484">
    <property type="entry name" value="EF-G"/>
    <property type="match status" value="1"/>
</dbReference>
<dbReference type="NCBIfam" id="NF009381">
    <property type="entry name" value="PRK12740.1-5"/>
    <property type="match status" value="1"/>
</dbReference>
<dbReference type="NCBIfam" id="TIGR00231">
    <property type="entry name" value="small_GTP"/>
    <property type="match status" value="1"/>
</dbReference>
<dbReference type="PANTHER" id="PTHR43636">
    <property type="entry name" value="ELONGATION FACTOR G, MITOCHONDRIAL"/>
    <property type="match status" value="1"/>
</dbReference>
<dbReference type="PANTHER" id="PTHR43636:SF2">
    <property type="entry name" value="ELONGATION FACTOR G, MITOCHONDRIAL"/>
    <property type="match status" value="1"/>
</dbReference>
<dbReference type="Pfam" id="PF00679">
    <property type="entry name" value="EFG_C"/>
    <property type="match status" value="1"/>
</dbReference>
<dbReference type="Pfam" id="PF14492">
    <property type="entry name" value="EFG_III"/>
    <property type="match status" value="1"/>
</dbReference>
<dbReference type="Pfam" id="PF03764">
    <property type="entry name" value="EFG_IV"/>
    <property type="match status" value="1"/>
</dbReference>
<dbReference type="Pfam" id="PF00009">
    <property type="entry name" value="GTP_EFTU"/>
    <property type="match status" value="1"/>
</dbReference>
<dbReference type="Pfam" id="PF03144">
    <property type="entry name" value="GTP_EFTU_D2"/>
    <property type="match status" value="1"/>
</dbReference>
<dbReference type="PRINTS" id="PR00315">
    <property type="entry name" value="ELONGATNFCT"/>
</dbReference>
<dbReference type="SMART" id="SM00838">
    <property type="entry name" value="EFG_C"/>
    <property type="match status" value="1"/>
</dbReference>
<dbReference type="SMART" id="SM00889">
    <property type="entry name" value="EFG_IV"/>
    <property type="match status" value="1"/>
</dbReference>
<dbReference type="SUPFAM" id="SSF54980">
    <property type="entry name" value="EF-G C-terminal domain-like"/>
    <property type="match status" value="2"/>
</dbReference>
<dbReference type="SUPFAM" id="SSF52540">
    <property type="entry name" value="P-loop containing nucleoside triphosphate hydrolases"/>
    <property type="match status" value="1"/>
</dbReference>
<dbReference type="SUPFAM" id="SSF54211">
    <property type="entry name" value="Ribosomal protein S5 domain 2-like"/>
    <property type="match status" value="1"/>
</dbReference>
<dbReference type="SUPFAM" id="SSF50447">
    <property type="entry name" value="Translation proteins"/>
    <property type="match status" value="1"/>
</dbReference>
<dbReference type="PROSITE" id="PS00301">
    <property type="entry name" value="G_TR_1"/>
    <property type="match status" value="1"/>
</dbReference>
<dbReference type="PROSITE" id="PS51722">
    <property type="entry name" value="G_TR_2"/>
    <property type="match status" value="1"/>
</dbReference>
<organism>
    <name type="scientific">Pyrenophora tritici-repentis (strain Pt-1C-BFP)</name>
    <name type="common">Wheat tan spot fungus</name>
    <name type="synonym">Drechslera tritici-repentis</name>
    <dbReference type="NCBI Taxonomy" id="426418"/>
    <lineage>
        <taxon>Eukaryota</taxon>
        <taxon>Fungi</taxon>
        <taxon>Dikarya</taxon>
        <taxon>Ascomycota</taxon>
        <taxon>Pezizomycotina</taxon>
        <taxon>Dothideomycetes</taxon>
        <taxon>Pleosporomycetidae</taxon>
        <taxon>Pleosporales</taxon>
        <taxon>Pleosporineae</taxon>
        <taxon>Pleosporaceae</taxon>
        <taxon>Pyrenophora</taxon>
    </lineage>
</organism>
<comment type="function">
    <text evidence="1">Mitochondrial GTPase that catalyzes the GTP-dependent ribosomal translocation step during translation elongation. During this step, the ribosome changes from the pre-translocational (PRE) to the post-translocational (POST) state as the newly formed A-site-bound peptidyl-tRNA and P-site-bound deacylated tRNA move to the P and E sites, respectively. Catalyzes the coordinated movement of the two tRNA molecules, the mRNA and conformational changes in the ribosome.</text>
</comment>
<comment type="pathway">
    <text evidence="1">Protein biosynthesis; polypeptide chain elongation.</text>
</comment>
<comment type="subcellular location">
    <subcellularLocation>
        <location evidence="1">Mitochondrion</location>
    </subcellularLocation>
</comment>
<comment type="similarity">
    <text evidence="2">Belongs to the TRAFAC class translation factor GTPase superfamily. Classic translation factor GTPase family. EF-G/EF-2 subfamily.</text>
</comment>
<gene>
    <name type="primary">mef1</name>
    <name type="ORF">PTRG_07041</name>
</gene>
<proteinExistence type="inferred from homology"/>
<reference key="1">
    <citation type="journal article" date="2013" name="G3 (Bethesda)">
        <title>Comparative genomics of a plant-pathogenic fungus, Pyrenophora tritici-repentis, reveals transduplication and the impact of repeat elements on pathogenicity and population divergence.</title>
        <authorList>
            <person name="Manning V.A."/>
            <person name="Pandelova I."/>
            <person name="Dhillon B."/>
            <person name="Wilhelm L.J."/>
            <person name="Goodwin S.B."/>
            <person name="Berlin A.M."/>
            <person name="Figueroa M."/>
            <person name="Freitag M."/>
            <person name="Hane J.K."/>
            <person name="Henrissat B."/>
            <person name="Holman W.H."/>
            <person name="Kodira C.D."/>
            <person name="Martin J."/>
            <person name="Oliver R.P."/>
            <person name="Robbertse B."/>
            <person name="Schackwitz W."/>
            <person name="Schwartz D.C."/>
            <person name="Spatafora J.W."/>
            <person name="Turgeon B.G."/>
            <person name="Yandava C."/>
            <person name="Young S."/>
            <person name="Zhou S."/>
            <person name="Zeng Q."/>
            <person name="Grigoriev I.V."/>
            <person name="Ma L.-J."/>
            <person name="Ciuffetti L.M."/>
        </authorList>
    </citation>
    <scope>NUCLEOTIDE SEQUENCE [LARGE SCALE GENOMIC DNA]</scope>
    <source>
        <strain>Pt-1C-BFP</strain>
    </source>
</reference>
<feature type="transit peptide" description="Mitochondrion" evidence="1">
    <location>
        <begin position="1"/>
        <end position="65"/>
    </location>
</feature>
<feature type="chain" id="PRO_0000385582" description="Elongation factor G, mitochondrial">
    <location>
        <begin position="66"/>
        <end position="801"/>
    </location>
</feature>
<feature type="domain" description="tr-type G">
    <location>
        <begin position="100"/>
        <end position="387"/>
    </location>
</feature>
<feature type="binding site" evidence="1">
    <location>
        <begin position="109"/>
        <end position="116"/>
    </location>
    <ligand>
        <name>GTP</name>
        <dbReference type="ChEBI" id="CHEBI:37565"/>
    </ligand>
</feature>
<feature type="binding site" evidence="1">
    <location>
        <begin position="185"/>
        <end position="189"/>
    </location>
    <ligand>
        <name>GTP</name>
        <dbReference type="ChEBI" id="CHEBI:37565"/>
    </ligand>
</feature>
<feature type="binding site" evidence="1">
    <location>
        <begin position="239"/>
        <end position="242"/>
    </location>
    <ligand>
        <name>GTP</name>
        <dbReference type="ChEBI" id="CHEBI:37565"/>
    </ligand>
</feature>
<accession>B2WBM8</accession>
<protein>
    <recommendedName>
        <fullName evidence="1">Elongation factor G, mitochondrial</fullName>
        <shortName evidence="1">EF-Gmt</shortName>
    </recommendedName>
    <alternativeName>
        <fullName evidence="1">Elongation factor G 1, mitochondrial</fullName>
        <shortName evidence="1">mEF-G 1</shortName>
    </alternativeName>
    <alternativeName>
        <fullName evidence="1">Elongation factor G1</fullName>
    </alternativeName>
</protein>
<name>EFGM_PYRTR</name>
<sequence length="801" mass="89154">MRVQSLLRAQSLATSSLRCSARSVARAPSRCALSTIAASRTPYTNGSKTDTWIEGQKIQNQRRWQTTAAKVLEQAKDDPSTLTQEKIVENLDPVEWERLSRVRNIGIAAHIDSGKTTATERVLFYTGRINAIHEVRGKDAVGAKMDSMDLEREKGITIQSAATFCDWVKKNDEGKEEKYHINLIDTPGHIDFTIEVERALRVLDGAVMILCAVSGVQSQTITVDRQMRRYNIPRISFVNKMDRMGANPWKAVEQINQKLRIPAAALQVPIGREDGFLGVVDLVRMKAIYNEGPKGEIIRETDEIPADIVELCKEKRQELIEKLADVDDEIAEIFLDEKEPTIAQIKAAIRRATISLKFTPVMMGSALADKSVQPMLDAVCDYLPNPSEVENMALDKKRAEAPVKLVSYNSLPFVGLAFKLEESSFGQLTYIRVYQGTLRKGMNVFNARSDKKIRIPKIVRMHSNDMEEIPEIGAGEICAVFGVDCASGDTFTDGNLAYTMTSMFVPEPVISLSIKPKHTKDTPNFSKAMSRFTREDPTFRVHTDAESQETIISGMGELHLDIYVERMRREYRVECETGQPQVAYRETMTQRVNFDHTLKKQSGGSGDYARVVGWMEPAESLGENKFEQQISGGTISEKFLFACEKGFMASTAKGPLLGHRVLGTSMVINDGATHAVDSSEMAFKNATQQAFRKAFKAGAPQVLEPLMKTTITAPNEFQGSVVGLLNKRNAVINDTEIGPEDFTVYADCSLNSMFGFSSQLRASTQGKGEFSMEFSHYSPAPPQLQRELVAKYEKEQAAKNA</sequence>